<name>MENE_LISMF</name>
<proteinExistence type="inferred from homology"/>
<gene>
    <name evidence="1" type="primary">menE</name>
    <name type="ordered locus">LMOf2365_1696</name>
</gene>
<feature type="chain" id="PRO_0000193163" description="2-succinylbenzoate--CoA ligase">
    <location>
        <begin position="1"/>
        <end position="467"/>
    </location>
</feature>
<reference key="1">
    <citation type="journal article" date="2004" name="Nucleic Acids Res.">
        <title>Whole genome comparisons of serotype 4b and 1/2a strains of the food-borne pathogen Listeria monocytogenes reveal new insights into the core genome components of this species.</title>
        <authorList>
            <person name="Nelson K.E."/>
            <person name="Fouts D.E."/>
            <person name="Mongodin E.F."/>
            <person name="Ravel J."/>
            <person name="DeBoy R.T."/>
            <person name="Kolonay J.F."/>
            <person name="Rasko D.A."/>
            <person name="Angiuoli S.V."/>
            <person name="Gill S.R."/>
            <person name="Paulsen I.T."/>
            <person name="Peterson J.D."/>
            <person name="White O."/>
            <person name="Nelson W.C."/>
            <person name="Nierman W.C."/>
            <person name="Beanan M.J."/>
            <person name="Brinkac L.M."/>
            <person name="Daugherty S.C."/>
            <person name="Dodson R.J."/>
            <person name="Durkin A.S."/>
            <person name="Madupu R."/>
            <person name="Haft D.H."/>
            <person name="Selengut J."/>
            <person name="Van Aken S.E."/>
            <person name="Khouri H.M."/>
            <person name="Fedorova N."/>
            <person name="Forberger H.A."/>
            <person name="Tran B."/>
            <person name="Kathariou S."/>
            <person name="Wonderling L.D."/>
            <person name="Uhlich G.A."/>
            <person name="Bayles D.O."/>
            <person name="Luchansky J.B."/>
            <person name="Fraser C.M."/>
        </authorList>
    </citation>
    <scope>NUCLEOTIDE SEQUENCE [LARGE SCALE GENOMIC DNA]</scope>
    <source>
        <strain>F2365</strain>
    </source>
</reference>
<keyword id="KW-0067">ATP-binding</keyword>
<keyword id="KW-0436">Ligase</keyword>
<keyword id="KW-0474">Menaquinone biosynthesis</keyword>
<keyword id="KW-0547">Nucleotide-binding</keyword>
<accession>Q71YZ5</accession>
<protein>
    <recommendedName>
        <fullName evidence="1">2-succinylbenzoate--CoA ligase</fullName>
        <ecNumber evidence="1">6.2.1.26</ecNumber>
    </recommendedName>
    <alternativeName>
        <fullName evidence="1">o-succinylbenzoyl-CoA synthetase</fullName>
        <shortName evidence="1">OSB-CoA synthetase</shortName>
    </alternativeName>
</protein>
<dbReference type="EC" id="6.2.1.26" evidence="1"/>
<dbReference type="EMBL" id="AE017262">
    <property type="protein sequence ID" value="AAT04469.1"/>
    <property type="molecule type" value="Genomic_DNA"/>
</dbReference>
<dbReference type="SMR" id="Q71YZ5"/>
<dbReference type="KEGG" id="lmf:LMOf2365_1696"/>
<dbReference type="HOGENOM" id="CLU_000022_59_0_9"/>
<dbReference type="UniPathway" id="UPA00079"/>
<dbReference type="UniPathway" id="UPA01057">
    <property type="reaction ID" value="UER00166"/>
</dbReference>
<dbReference type="GO" id="GO:0005524">
    <property type="term" value="F:ATP binding"/>
    <property type="evidence" value="ECO:0007669"/>
    <property type="project" value="UniProtKB-KW"/>
</dbReference>
<dbReference type="GO" id="GO:0031956">
    <property type="term" value="F:medium-chain fatty acid-CoA ligase activity"/>
    <property type="evidence" value="ECO:0007669"/>
    <property type="project" value="TreeGrafter"/>
</dbReference>
<dbReference type="GO" id="GO:0008756">
    <property type="term" value="F:o-succinylbenzoate-CoA ligase activity"/>
    <property type="evidence" value="ECO:0007669"/>
    <property type="project" value="UniProtKB-UniRule"/>
</dbReference>
<dbReference type="GO" id="GO:0006631">
    <property type="term" value="P:fatty acid metabolic process"/>
    <property type="evidence" value="ECO:0007669"/>
    <property type="project" value="TreeGrafter"/>
</dbReference>
<dbReference type="GO" id="GO:0009234">
    <property type="term" value="P:menaquinone biosynthetic process"/>
    <property type="evidence" value="ECO:0007669"/>
    <property type="project" value="UniProtKB-UniRule"/>
</dbReference>
<dbReference type="CDD" id="cd05912">
    <property type="entry name" value="OSB_CoA_lg"/>
    <property type="match status" value="1"/>
</dbReference>
<dbReference type="FunFam" id="3.30.300.30:FF:000008">
    <property type="entry name" value="2,3-dihydroxybenzoate-AMP ligase"/>
    <property type="match status" value="1"/>
</dbReference>
<dbReference type="FunFam" id="3.40.50.12780:FF:000103">
    <property type="entry name" value="2-succinylbenzoate--CoA ligase"/>
    <property type="match status" value="1"/>
</dbReference>
<dbReference type="Gene3D" id="3.30.300.30">
    <property type="match status" value="1"/>
</dbReference>
<dbReference type="Gene3D" id="3.40.50.12780">
    <property type="entry name" value="N-terminal domain of ligase-like"/>
    <property type="match status" value="1"/>
</dbReference>
<dbReference type="HAMAP" id="MF_00731">
    <property type="entry name" value="MenE"/>
    <property type="match status" value="1"/>
</dbReference>
<dbReference type="InterPro" id="IPR025110">
    <property type="entry name" value="AMP-bd_C"/>
</dbReference>
<dbReference type="InterPro" id="IPR045851">
    <property type="entry name" value="AMP-bd_C_sf"/>
</dbReference>
<dbReference type="InterPro" id="IPR020845">
    <property type="entry name" value="AMP-binding_CS"/>
</dbReference>
<dbReference type="InterPro" id="IPR000873">
    <property type="entry name" value="AMP-dep_synth/lig_dom"/>
</dbReference>
<dbReference type="InterPro" id="IPR042099">
    <property type="entry name" value="ANL_N_sf"/>
</dbReference>
<dbReference type="InterPro" id="IPR010192">
    <property type="entry name" value="MenE"/>
</dbReference>
<dbReference type="NCBIfam" id="TIGR01923">
    <property type="entry name" value="menE"/>
    <property type="match status" value="1"/>
</dbReference>
<dbReference type="NCBIfam" id="NF002966">
    <property type="entry name" value="PRK03640.1"/>
    <property type="match status" value="1"/>
</dbReference>
<dbReference type="PANTHER" id="PTHR43201">
    <property type="entry name" value="ACYL-COA SYNTHETASE"/>
    <property type="match status" value="1"/>
</dbReference>
<dbReference type="PANTHER" id="PTHR43201:SF5">
    <property type="entry name" value="MEDIUM-CHAIN ACYL-COA LIGASE ACSF2, MITOCHONDRIAL"/>
    <property type="match status" value="1"/>
</dbReference>
<dbReference type="Pfam" id="PF00501">
    <property type="entry name" value="AMP-binding"/>
    <property type="match status" value="1"/>
</dbReference>
<dbReference type="Pfam" id="PF13193">
    <property type="entry name" value="AMP-binding_C"/>
    <property type="match status" value="1"/>
</dbReference>
<dbReference type="SUPFAM" id="SSF56801">
    <property type="entry name" value="Acetyl-CoA synthetase-like"/>
    <property type="match status" value="1"/>
</dbReference>
<dbReference type="PROSITE" id="PS00455">
    <property type="entry name" value="AMP_BINDING"/>
    <property type="match status" value="1"/>
</dbReference>
<evidence type="ECO:0000255" key="1">
    <source>
        <dbReference type="HAMAP-Rule" id="MF_00731"/>
    </source>
</evidence>
<comment type="function">
    <text evidence="1">Converts 2-succinylbenzoate (OSB) to 2-succinylbenzoyl-CoA (OSB-CoA).</text>
</comment>
<comment type="catalytic activity">
    <reaction evidence="1">
        <text>2-succinylbenzoate + ATP + CoA = 2-succinylbenzoyl-CoA + AMP + diphosphate</text>
        <dbReference type="Rhea" id="RHEA:17009"/>
        <dbReference type="ChEBI" id="CHEBI:18325"/>
        <dbReference type="ChEBI" id="CHEBI:30616"/>
        <dbReference type="ChEBI" id="CHEBI:33019"/>
        <dbReference type="ChEBI" id="CHEBI:57287"/>
        <dbReference type="ChEBI" id="CHEBI:57364"/>
        <dbReference type="ChEBI" id="CHEBI:456215"/>
        <dbReference type="EC" id="6.2.1.26"/>
    </reaction>
</comment>
<comment type="pathway">
    <text evidence="1">Quinol/quinone metabolism; 1,4-dihydroxy-2-naphthoate biosynthesis; 1,4-dihydroxy-2-naphthoate from chorismate: step 5/7.</text>
</comment>
<comment type="pathway">
    <text evidence="1">Quinol/quinone metabolism; menaquinone biosynthesis.</text>
</comment>
<comment type="similarity">
    <text evidence="1">Belongs to the ATP-dependent AMP-binding enzyme family. MenE subfamily.</text>
</comment>
<organism>
    <name type="scientific">Listeria monocytogenes serotype 4b (strain F2365)</name>
    <dbReference type="NCBI Taxonomy" id="265669"/>
    <lineage>
        <taxon>Bacteria</taxon>
        <taxon>Bacillati</taxon>
        <taxon>Bacillota</taxon>
        <taxon>Bacilli</taxon>
        <taxon>Bacillales</taxon>
        <taxon>Listeriaceae</taxon>
        <taxon>Listeria</taxon>
    </lineage>
</organism>
<sequence length="467" mass="51595">MTNWLQKRVRLSPKETALVFEGKEETFEEISEAVKQLAGKLFALGIRKDEMVALLGKNDRMTFLLIHALQQLGAVTLFLNNRLTKKEISFQLANAEVKHVIVADSLVDKVATGISYATLAETDYEAPALLETWDLSRAASVMYTSGTTGKPKGVVQTYENHWWSAVASVLNLGLTEKDSWLCAVPIFHISGLSIMMRSVIYGIPVYLEEHFDEEKITQLLESGKISTISVVTSMLERLLKIHSGSYHPNVRTVLLGGGPASKAVLEICKQRDIPLVQSFGMTETASQIVTLPPKDALNKIGSSGKALFPAEVKIADDGEILLKGPSITPGYLHNKKATEASFVDGWFKTGDIGYLDEEGFLFVLERRSDLIISGGENIYPTEIEHVISEYEGVKEVAVIGKPDDKWGSVPVAFIVAEETFDEAELRLICETNLAGYKIPKQITIVEKLPKTASGKIQRNKLKERHSM</sequence>